<reference key="1">
    <citation type="journal article" date="2001" name="Genome Res.">
        <title>The complete genome sequence of the lactic acid bacterium Lactococcus lactis ssp. lactis IL1403.</title>
        <authorList>
            <person name="Bolotin A."/>
            <person name="Wincker P."/>
            <person name="Mauger S."/>
            <person name="Jaillon O."/>
            <person name="Malarme K."/>
            <person name="Weissenbach J."/>
            <person name="Ehrlich S.D."/>
            <person name="Sorokin A."/>
        </authorList>
    </citation>
    <scope>NUCLEOTIDE SEQUENCE [LARGE SCALE GENOMIC DNA]</scope>
    <source>
        <strain>IL1403</strain>
    </source>
</reference>
<evidence type="ECO:0000250" key="1"/>
<evidence type="ECO:0000255" key="2">
    <source>
        <dbReference type="PROSITE-ProRule" id="PRU00686"/>
    </source>
</evidence>
<evidence type="ECO:0000305" key="3"/>
<feature type="chain" id="PRO_0000141643" description="Glutaredoxin-like protein NrdH">
    <location>
        <begin position="1"/>
        <end position="72"/>
    </location>
</feature>
<feature type="domain" description="Glutaredoxin" evidence="2">
    <location>
        <begin position="1"/>
        <end position="72"/>
    </location>
</feature>
<feature type="disulfide bond" description="Redox-active" evidence="1">
    <location>
        <begin position="10"/>
        <end position="13"/>
    </location>
</feature>
<protein>
    <recommendedName>
        <fullName>Glutaredoxin-like protein NrdH</fullName>
    </recommendedName>
</protein>
<gene>
    <name type="primary">nrdH</name>
    <name type="ordered locus">LL0977</name>
    <name type="ORF">L5126</name>
</gene>
<sequence>MVTVYSKNNCMQCKMVKKWLSEHEIAFDEINIDEQPEFVEKVIEMGFRAAPVITKDDFAFSGFRPSELAKLA</sequence>
<comment type="function">
    <text>Electron transport system for the ribonucleotide reductase system NrdEF.</text>
</comment>
<comment type="similarity">
    <text evidence="3">Belongs to the glutaredoxin family.</text>
</comment>
<comment type="sequence caution" evidence="3">
    <conflict type="erroneous initiation">
        <sequence resource="EMBL-CDS" id="AAK05075"/>
    </conflict>
</comment>
<name>NRDH_LACLA</name>
<keyword id="KW-1015">Disulfide bond</keyword>
<keyword id="KW-0249">Electron transport</keyword>
<keyword id="KW-0676">Redox-active center</keyword>
<keyword id="KW-1185">Reference proteome</keyword>
<keyword id="KW-0813">Transport</keyword>
<dbReference type="EMBL" id="AE005176">
    <property type="protein sequence ID" value="AAK05075.1"/>
    <property type="status" value="ALT_INIT"/>
    <property type="molecule type" value="Genomic_DNA"/>
</dbReference>
<dbReference type="PIR" id="A86747">
    <property type="entry name" value="A86747"/>
</dbReference>
<dbReference type="RefSeq" id="NP_267133.1">
    <property type="nucleotide sequence ID" value="NC_002662.1"/>
</dbReference>
<dbReference type="RefSeq" id="WP_012897612.1">
    <property type="nucleotide sequence ID" value="NC_002662.1"/>
</dbReference>
<dbReference type="SMR" id="Q9CGW5"/>
<dbReference type="PaxDb" id="272623-L5126"/>
<dbReference type="EnsemblBacteria" id="AAK05075">
    <property type="protein sequence ID" value="AAK05075"/>
    <property type="gene ID" value="L5126"/>
</dbReference>
<dbReference type="KEGG" id="lla:L5126"/>
<dbReference type="PATRIC" id="fig|272623.7.peg.1045"/>
<dbReference type="eggNOG" id="COG0695">
    <property type="taxonomic scope" value="Bacteria"/>
</dbReference>
<dbReference type="HOGENOM" id="CLU_026126_9_0_9"/>
<dbReference type="OrthoDB" id="9795531at2"/>
<dbReference type="Proteomes" id="UP000002196">
    <property type="component" value="Chromosome"/>
</dbReference>
<dbReference type="GO" id="GO:0009055">
    <property type="term" value="F:electron transfer activity"/>
    <property type="evidence" value="ECO:0007669"/>
    <property type="project" value="TreeGrafter"/>
</dbReference>
<dbReference type="GO" id="GO:0045454">
    <property type="term" value="P:cell redox homeostasis"/>
    <property type="evidence" value="ECO:0007669"/>
    <property type="project" value="InterPro"/>
</dbReference>
<dbReference type="CDD" id="cd02976">
    <property type="entry name" value="NrdH"/>
    <property type="match status" value="1"/>
</dbReference>
<dbReference type="Gene3D" id="3.40.30.10">
    <property type="entry name" value="Glutaredoxin"/>
    <property type="match status" value="1"/>
</dbReference>
<dbReference type="InterPro" id="IPR011909">
    <property type="entry name" value="GlrX_NrdH"/>
</dbReference>
<dbReference type="InterPro" id="IPR002109">
    <property type="entry name" value="Glutaredoxin"/>
</dbReference>
<dbReference type="InterPro" id="IPR051548">
    <property type="entry name" value="Grx-like_ET"/>
</dbReference>
<dbReference type="InterPro" id="IPR036249">
    <property type="entry name" value="Thioredoxin-like_sf"/>
</dbReference>
<dbReference type="NCBIfam" id="TIGR02194">
    <property type="entry name" value="GlrX_NrdH"/>
    <property type="match status" value="1"/>
</dbReference>
<dbReference type="PANTHER" id="PTHR34386">
    <property type="entry name" value="GLUTAREDOXIN"/>
    <property type="match status" value="1"/>
</dbReference>
<dbReference type="PANTHER" id="PTHR34386:SF1">
    <property type="entry name" value="GLUTAREDOXIN-LIKE PROTEIN NRDH"/>
    <property type="match status" value="1"/>
</dbReference>
<dbReference type="Pfam" id="PF00462">
    <property type="entry name" value="Glutaredoxin"/>
    <property type="match status" value="1"/>
</dbReference>
<dbReference type="SUPFAM" id="SSF52833">
    <property type="entry name" value="Thioredoxin-like"/>
    <property type="match status" value="1"/>
</dbReference>
<dbReference type="PROSITE" id="PS51354">
    <property type="entry name" value="GLUTAREDOXIN_2"/>
    <property type="match status" value="1"/>
</dbReference>
<accession>Q9CGW5</accession>
<proteinExistence type="inferred from homology"/>
<organism>
    <name type="scientific">Lactococcus lactis subsp. lactis (strain IL1403)</name>
    <name type="common">Streptococcus lactis</name>
    <dbReference type="NCBI Taxonomy" id="272623"/>
    <lineage>
        <taxon>Bacteria</taxon>
        <taxon>Bacillati</taxon>
        <taxon>Bacillota</taxon>
        <taxon>Bacilli</taxon>
        <taxon>Lactobacillales</taxon>
        <taxon>Streptococcaceae</taxon>
        <taxon>Lactococcus</taxon>
    </lineage>
</organism>